<evidence type="ECO:0000250" key="1">
    <source>
        <dbReference type="UniProtKB" id="Q14376"/>
    </source>
</evidence>
<evidence type="ECO:0000305" key="2"/>
<keyword id="KW-0119">Carbohydrate metabolism</keyword>
<keyword id="KW-0299">Galactose metabolism</keyword>
<keyword id="KW-0413">Isomerase</keyword>
<keyword id="KW-0520">NAD</keyword>
<keyword id="KW-1185">Reference proteome</keyword>
<reference key="1">
    <citation type="journal article" date="2004" name="Genome Res.">
        <title>The status, quality, and expansion of the NIH full-length cDNA project: the Mammalian Gene Collection (MGC).</title>
        <authorList>
            <consortium name="The MGC Project Team"/>
        </authorList>
    </citation>
    <scope>NUCLEOTIDE SEQUENCE [LARGE SCALE MRNA]</scope>
    <source>
        <tissue>Colon</tissue>
    </source>
</reference>
<reference key="2">
    <citation type="journal article" date="2010" name="Cell">
        <title>A tissue-specific atlas of mouse protein phosphorylation and expression.</title>
        <authorList>
            <person name="Huttlin E.L."/>
            <person name="Jedrychowski M.P."/>
            <person name="Elias J.E."/>
            <person name="Goswami T."/>
            <person name="Rad R."/>
            <person name="Beausoleil S.A."/>
            <person name="Villen J."/>
            <person name="Haas W."/>
            <person name="Sowa M.E."/>
            <person name="Gygi S.P."/>
        </authorList>
    </citation>
    <scope>IDENTIFICATION BY MASS SPECTROMETRY [LARGE SCALE ANALYSIS]</scope>
    <source>
        <tissue>Brain</tissue>
        <tissue>Brown adipose tissue</tissue>
        <tissue>Kidney</tissue>
        <tissue>Liver</tissue>
        <tissue>Lung</tissue>
        <tissue>Pancreas</tissue>
        <tissue>Spleen</tissue>
        <tissue>Testis</tissue>
    </source>
</reference>
<proteinExistence type="evidence at protein level"/>
<gene>
    <name type="primary">Gale</name>
</gene>
<comment type="function">
    <text evidence="1">Catalyzes two distinct but analogous reactions: the reversible epimerization of UDP-glucose to UDP-galactose and the reversible epimerization of UDP-N-acetylglucosamine to UDP-N-acetylgalactosamine. The reaction with UDP-Gal plays a critical role in the Leloir pathway of galactose catabolism in which galactose is converted to the glycolytic intermediate glucose 6-phosphate. It contributes to the catabolism of dietary galactose and enables the endogenous biosynthesis of both UDP-Gal and UDP-GalNAc when exogenous sources are limited. Both UDP-sugar interconversions are important in the synthesis of glycoproteins and glycolipids.</text>
</comment>
<comment type="catalytic activity">
    <reaction evidence="1">
        <text>UDP-alpha-D-glucose = UDP-alpha-D-galactose</text>
        <dbReference type="Rhea" id="RHEA:22168"/>
        <dbReference type="ChEBI" id="CHEBI:58885"/>
        <dbReference type="ChEBI" id="CHEBI:66914"/>
        <dbReference type="EC" id="5.1.3.2"/>
    </reaction>
</comment>
<comment type="catalytic activity">
    <reaction evidence="1">
        <text>UDP-N-acetyl-alpha-D-glucosamine = UDP-N-acetyl-alpha-D-galactosamine</text>
        <dbReference type="Rhea" id="RHEA:20517"/>
        <dbReference type="ChEBI" id="CHEBI:57705"/>
        <dbReference type="ChEBI" id="CHEBI:67138"/>
        <dbReference type="EC" id="5.1.3.7"/>
    </reaction>
</comment>
<comment type="cofactor">
    <cofactor evidence="1">
        <name>NAD(+)</name>
        <dbReference type="ChEBI" id="CHEBI:57540"/>
    </cofactor>
</comment>
<comment type="pathway">
    <text>Carbohydrate metabolism; galactose metabolism.</text>
</comment>
<comment type="subunit">
    <text evidence="1">Homodimer.</text>
</comment>
<comment type="similarity">
    <text evidence="2">Belongs to the NAD(P)-dependent epimerase/dehydratase family.</text>
</comment>
<protein>
    <recommendedName>
        <fullName evidence="1">UDP-glucose 4-epimerase</fullName>
        <ecNumber evidence="1">5.1.3.2</ecNumber>
    </recommendedName>
    <alternativeName>
        <fullName evidence="1">Galactowaldenase</fullName>
    </alternativeName>
    <alternativeName>
        <fullName evidence="1">UDP-N-acetylglucosamine 4-epimerase</fullName>
        <shortName evidence="1">UDP-GlcNAc 4-epimerase</shortName>
        <ecNumber evidence="1">5.1.3.7</ecNumber>
    </alternativeName>
    <alternativeName>
        <fullName evidence="1">UDP-galactosamine 4-epimerase</fullName>
        <shortName evidence="1">UDP-GalNAc 4-epimerase</shortName>
    </alternativeName>
    <alternativeName>
        <fullName evidence="1">UDP-galactose 4-epimerase</fullName>
    </alternativeName>
</protein>
<name>GALE_MOUSE</name>
<organism>
    <name type="scientific">Mus musculus</name>
    <name type="common">Mouse</name>
    <dbReference type="NCBI Taxonomy" id="10090"/>
    <lineage>
        <taxon>Eukaryota</taxon>
        <taxon>Metazoa</taxon>
        <taxon>Chordata</taxon>
        <taxon>Craniata</taxon>
        <taxon>Vertebrata</taxon>
        <taxon>Euteleostomi</taxon>
        <taxon>Mammalia</taxon>
        <taxon>Eutheria</taxon>
        <taxon>Euarchontoglires</taxon>
        <taxon>Glires</taxon>
        <taxon>Rodentia</taxon>
        <taxon>Myomorpha</taxon>
        <taxon>Muroidea</taxon>
        <taxon>Muridae</taxon>
        <taxon>Murinae</taxon>
        <taxon>Mus</taxon>
        <taxon>Mus</taxon>
    </lineage>
</organism>
<dbReference type="EC" id="5.1.3.2" evidence="1"/>
<dbReference type="EC" id="5.1.3.7" evidence="1"/>
<dbReference type="EMBL" id="BC027438">
    <property type="protein sequence ID" value="AAH27438.1"/>
    <property type="molecule type" value="mRNA"/>
</dbReference>
<dbReference type="CCDS" id="CCDS18796.1"/>
<dbReference type="RefSeq" id="NP_001343422.1">
    <property type="nucleotide sequence ID" value="NM_001356493.1"/>
</dbReference>
<dbReference type="RefSeq" id="NP_848476.1">
    <property type="nucleotide sequence ID" value="NM_178389.3"/>
</dbReference>
<dbReference type="RefSeq" id="XP_006539280.1">
    <property type="nucleotide sequence ID" value="XM_006539217.1"/>
</dbReference>
<dbReference type="RefSeq" id="XP_006539281.1">
    <property type="nucleotide sequence ID" value="XM_006539218.5"/>
</dbReference>
<dbReference type="RefSeq" id="XP_006539282.1">
    <property type="nucleotide sequence ID" value="XM_006539219.5"/>
</dbReference>
<dbReference type="SMR" id="Q8R059"/>
<dbReference type="BioGRID" id="216604">
    <property type="interactions" value="1"/>
</dbReference>
<dbReference type="FunCoup" id="Q8R059">
    <property type="interactions" value="653"/>
</dbReference>
<dbReference type="STRING" id="10090.ENSMUSP00000099599"/>
<dbReference type="iPTMnet" id="Q8R059"/>
<dbReference type="PhosphoSitePlus" id="Q8R059"/>
<dbReference type="SwissPalm" id="Q8R059"/>
<dbReference type="jPOST" id="Q8R059"/>
<dbReference type="PaxDb" id="10090-ENSMUSP00000099599"/>
<dbReference type="PeptideAtlas" id="Q8R059"/>
<dbReference type="ProteomicsDB" id="267762"/>
<dbReference type="Pumba" id="Q8R059"/>
<dbReference type="Antibodypedia" id="1527">
    <property type="antibodies" value="310 antibodies from 30 providers"/>
</dbReference>
<dbReference type="DNASU" id="74246"/>
<dbReference type="Ensembl" id="ENSMUST00000102540.2">
    <property type="protein sequence ID" value="ENSMUSP00000099599.2"/>
    <property type="gene ID" value="ENSMUSG00000028671.17"/>
</dbReference>
<dbReference type="Ensembl" id="ENSMUST00000102541.10">
    <property type="protein sequence ID" value="ENSMUSP00000099600.4"/>
    <property type="gene ID" value="ENSMUSG00000028671.17"/>
</dbReference>
<dbReference type="GeneID" id="74246"/>
<dbReference type="UCSC" id="uc008vhk.1">
    <property type="organism name" value="mouse"/>
</dbReference>
<dbReference type="AGR" id="MGI:1921496"/>
<dbReference type="CTD" id="2582"/>
<dbReference type="MGI" id="MGI:1921496">
    <property type="gene designation" value="Gale"/>
</dbReference>
<dbReference type="VEuPathDB" id="HostDB:ENSMUSG00000028671"/>
<dbReference type="eggNOG" id="KOG1371">
    <property type="taxonomic scope" value="Eukaryota"/>
</dbReference>
<dbReference type="GeneTree" id="ENSGT00940000158000"/>
<dbReference type="HOGENOM" id="CLU_007383_1_10_1"/>
<dbReference type="InParanoid" id="Q8R059"/>
<dbReference type="OMA" id="GEHLICN"/>
<dbReference type="OrthoDB" id="9402762at2759"/>
<dbReference type="PhylomeDB" id="Q8R059"/>
<dbReference type="TreeFam" id="TF105800"/>
<dbReference type="Reactome" id="R-MMU-70370">
    <property type="pathway name" value="Galactose catabolism"/>
</dbReference>
<dbReference type="UniPathway" id="UPA00214"/>
<dbReference type="BioGRID-ORCS" id="74246">
    <property type="hits" value="22 hits in 84 CRISPR screens"/>
</dbReference>
<dbReference type="ChiTaRS" id="Gale">
    <property type="organism name" value="mouse"/>
</dbReference>
<dbReference type="PRO" id="PR:Q8R059"/>
<dbReference type="Proteomes" id="UP000000589">
    <property type="component" value="Chromosome 4"/>
</dbReference>
<dbReference type="RNAct" id="Q8R059">
    <property type="molecule type" value="protein"/>
</dbReference>
<dbReference type="Bgee" id="ENSMUSG00000028671">
    <property type="expression patterns" value="Expressed in duodenum and 192 other cell types or tissues"/>
</dbReference>
<dbReference type="ExpressionAtlas" id="Q8R059">
    <property type="expression patterns" value="baseline and differential"/>
</dbReference>
<dbReference type="GO" id="GO:0042803">
    <property type="term" value="F:protein homodimerization activity"/>
    <property type="evidence" value="ECO:0007669"/>
    <property type="project" value="Ensembl"/>
</dbReference>
<dbReference type="GO" id="GO:0003978">
    <property type="term" value="F:UDP-glucose 4-epimerase activity"/>
    <property type="evidence" value="ECO:0000314"/>
    <property type="project" value="MGI"/>
</dbReference>
<dbReference type="GO" id="GO:0003974">
    <property type="term" value="F:UDP-N-acetylglucosamine 4-epimerase activity"/>
    <property type="evidence" value="ECO:0007669"/>
    <property type="project" value="UniProtKB-EC"/>
</dbReference>
<dbReference type="GO" id="GO:0033499">
    <property type="term" value="P:galactose catabolic process via UDP-galactose, Leloir pathway"/>
    <property type="evidence" value="ECO:0000315"/>
    <property type="project" value="MGI"/>
</dbReference>
<dbReference type="GO" id="GO:0006012">
    <property type="term" value="P:galactose metabolic process"/>
    <property type="evidence" value="ECO:0000314"/>
    <property type="project" value="MGI"/>
</dbReference>
<dbReference type="GO" id="GO:0061623">
    <property type="term" value="P:glycolytic process from galactose"/>
    <property type="evidence" value="ECO:0000305"/>
    <property type="project" value="MGI"/>
</dbReference>
<dbReference type="CDD" id="cd05247">
    <property type="entry name" value="UDP_G4E_1_SDR_e"/>
    <property type="match status" value="1"/>
</dbReference>
<dbReference type="Gene3D" id="3.40.50.720">
    <property type="entry name" value="NAD(P)-binding Rossmann-like Domain"/>
    <property type="match status" value="1"/>
</dbReference>
<dbReference type="Gene3D" id="3.90.25.10">
    <property type="entry name" value="UDP-galactose 4-epimerase, domain 1"/>
    <property type="match status" value="1"/>
</dbReference>
<dbReference type="InterPro" id="IPR016040">
    <property type="entry name" value="NAD(P)-bd_dom"/>
</dbReference>
<dbReference type="InterPro" id="IPR036291">
    <property type="entry name" value="NAD(P)-bd_dom_sf"/>
</dbReference>
<dbReference type="InterPro" id="IPR005886">
    <property type="entry name" value="UDP_G4E"/>
</dbReference>
<dbReference type="NCBIfam" id="TIGR01179">
    <property type="entry name" value="galE"/>
    <property type="match status" value="1"/>
</dbReference>
<dbReference type="NCBIfam" id="NF007956">
    <property type="entry name" value="PRK10675.1"/>
    <property type="match status" value="1"/>
</dbReference>
<dbReference type="PANTHER" id="PTHR43725">
    <property type="entry name" value="UDP-GLUCOSE 4-EPIMERASE"/>
    <property type="match status" value="1"/>
</dbReference>
<dbReference type="PANTHER" id="PTHR43725:SF47">
    <property type="entry name" value="UDP-GLUCOSE 4-EPIMERASE"/>
    <property type="match status" value="1"/>
</dbReference>
<dbReference type="Pfam" id="PF16363">
    <property type="entry name" value="GDP_Man_Dehyd"/>
    <property type="match status" value="1"/>
</dbReference>
<dbReference type="PRINTS" id="PR01713">
    <property type="entry name" value="NUCEPIMERASE"/>
</dbReference>
<dbReference type="SUPFAM" id="SSF51735">
    <property type="entry name" value="NAD(P)-binding Rossmann-fold domains"/>
    <property type="match status" value="1"/>
</dbReference>
<feature type="chain" id="PRO_0000183190" description="UDP-glucose 4-epimerase">
    <location>
        <begin position="1"/>
        <end position="347"/>
    </location>
</feature>
<feature type="active site" description="Proton acceptor" evidence="1">
    <location>
        <position position="156"/>
    </location>
</feature>
<feature type="binding site" evidence="1">
    <location>
        <begin position="11"/>
        <end position="13"/>
    </location>
    <ligand>
        <name>NAD(+)</name>
        <dbReference type="ChEBI" id="CHEBI:57540"/>
    </ligand>
</feature>
<feature type="binding site" evidence="1">
    <location>
        <begin position="32"/>
        <end position="36"/>
    </location>
    <ligand>
        <name>NAD(+)</name>
        <dbReference type="ChEBI" id="CHEBI:57540"/>
    </ligand>
</feature>
<feature type="binding site" evidence="1">
    <location>
        <begin position="65"/>
        <end position="66"/>
    </location>
    <ligand>
        <name>NAD(+)</name>
        <dbReference type="ChEBI" id="CHEBI:57540"/>
    </ligand>
</feature>
<feature type="binding site" evidence="1">
    <location>
        <position position="87"/>
    </location>
    <ligand>
        <name>NAD(+)</name>
        <dbReference type="ChEBI" id="CHEBI:57540"/>
    </ligand>
</feature>
<feature type="binding site" evidence="1">
    <location>
        <position position="91"/>
    </location>
    <ligand>
        <name>NAD(+)</name>
        <dbReference type="ChEBI" id="CHEBI:57540"/>
    </ligand>
</feature>
<feature type="binding site" evidence="1">
    <location>
        <begin position="131"/>
        <end position="133"/>
    </location>
    <ligand>
        <name>substrate</name>
    </ligand>
</feature>
<feature type="binding site" evidence="1">
    <location>
        <position position="160"/>
    </location>
    <ligand>
        <name>NAD(+)</name>
        <dbReference type="ChEBI" id="CHEBI:57540"/>
    </ligand>
</feature>
<feature type="binding site" evidence="1">
    <location>
        <begin position="184"/>
        <end position="186"/>
    </location>
    <ligand>
        <name>substrate</name>
    </ligand>
</feature>
<feature type="binding site" evidence="1">
    <location>
        <position position="184"/>
    </location>
    <ligand>
        <name>NAD(+)</name>
        <dbReference type="ChEBI" id="CHEBI:57540"/>
    </ligand>
</feature>
<feature type="binding site" evidence="1">
    <location>
        <begin position="205"/>
        <end position="207"/>
    </location>
    <ligand>
        <name>substrate</name>
    </ligand>
</feature>
<feature type="binding site" evidence="1">
    <location>
        <begin position="223"/>
        <end position="225"/>
    </location>
    <ligand>
        <name>substrate</name>
    </ligand>
</feature>
<feature type="binding site" evidence="1">
    <location>
        <position position="238"/>
    </location>
    <ligand>
        <name>substrate</name>
    </ligand>
</feature>
<feature type="binding site" evidence="1">
    <location>
        <begin position="299"/>
        <end position="302"/>
    </location>
    <ligand>
        <name>substrate</name>
    </ligand>
</feature>
<sequence>MEKVLVTGGAGYIGSHTVLELLEAGYSPVVIDNFHNAIRGEDSMPESLRRVQELTGRSVEFEEMDILDQAALQHLFKKHSFKAVIHFAGLKAVGESVQKPLDYYRVNLTGTIQLLEIMRAHGVKNLVFSSSATVYGNPQYLPLDEAHPTGGCTNPYGKSKFFIEEMIRDLCRADTAWNAVLLRYFNPIGAHASGRIGEDPQGIPNNLMPYVSQVAIGRREALNVFGDDYATEDGTGVRDYIHVVDLAKGHIAALKKLKEQCGCRTYNLGTGTGYSVLQMVQAMEKASGKKIPYKVVARREGDVAACYANPSLAHEELGWTAALGLDRMCEDLWRWQKQNPSGFGAQA</sequence>
<accession>Q8R059</accession>